<reference key="1">
    <citation type="journal article" date="2009" name="Stand. Genomic Sci.">
        <title>Complete genome sequence of Beutenbergia cavernae type strain (HKI 0122).</title>
        <authorList>
            <person name="Land M."/>
            <person name="Pukall R."/>
            <person name="Abt B."/>
            <person name="Goker M."/>
            <person name="Rohde M."/>
            <person name="Glavina Del Rio T."/>
            <person name="Tice H."/>
            <person name="Copeland A."/>
            <person name="Cheng J.F."/>
            <person name="Lucas S."/>
            <person name="Chen F."/>
            <person name="Nolan M."/>
            <person name="Bruce D."/>
            <person name="Goodwin L."/>
            <person name="Pitluck S."/>
            <person name="Ivanova N."/>
            <person name="Mavromatis K."/>
            <person name="Ovchinnikova G."/>
            <person name="Pati A."/>
            <person name="Chen A."/>
            <person name="Palaniappan K."/>
            <person name="Hauser L."/>
            <person name="Chang Y.J."/>
            <person name="Jefferies C.C."/>
            <person name="Saunders E."/>
            <person name="Brettin T."/>
            <person name="Detter J.C."/>
            <person name="Han C."/>
            <person name="Chain P."/>
            <person name="Bristow J."/>
            <person name="Eisen J.A."/>
            <person name="Markowitz V."/>
            <person name="Hugenholtz P."/>
            <person name="Kyrpides N.C."/>
            <person name="Klenk H.P."/>
            <person name="Lapidus A."/>
        </authorList>
    </citation>
    <scope>NUCLEOTIDE SEQUENCE [LARGE SCALE GENOMIC DNA]</scope>
    <source>
        <strain>ATCC BAA-8 / DSM 12333 / CCUG 43141 / JCM 11478 / NBRC 16432 / NCIMB 13614 / HKI 0122</strain>
    </source>
</reference>
<accession>C5C0N2</accession>
<keyword id="KW-1185">Reference proteome</keyword>
<keyword id="KW-0687">Ribonucleoprotein</keyword>
<keyword id="KW-0689">Ribosomal protein</keyword>
<feature type="chain" id="PRO_1000204901" description="Large ribosomal subunit protein bL33">
    <location>
        <begin position="1"/>
        <end position="56"/>
    </location>
</feature>
<sequence>MASKSADIRPKITLACEVCKERNYITTKNRRNHPDRLELQKFCPRCTAKTAHRETR</sequence>
<proteinExistence type="inferred from homology"/>
<gene>
    <name evidence="1" type="primary">rpmG</name>
    <name type="ordered locus">Bcav_3184</name>
</gene>
<evidence type="ECO:0000255" key="1">
    <source>
        <dbReference type="HAMAP-Rule" id="MF_00294"/>
    </source>
</evidence>
<evidence type="ECO:0000305" key="2"/>
<organism>
    <name type="scientific">Beutenbergia cavernae (strain ATCC BAA-8 / DSM 12333 / CCUG 43141 / JCM 11478 / NBRC 16432 / NCIMB 13614 / HKI 0122)</name>
    <dbReference type="NCBI Taxonomy" id="471853"/>
    <lineage>
        <taxon>Bacteria</taxon>
        <taxon>Bacillati</taxon>
        <taxon>Actinomycetota</taxon>
        <taxon>Actinomycetes</taxon>
        <taxon>Micrococcales</taxon>
        <taxon>Beutenbergiaceae</taxon>
        <taxon>Beutenbergia</taxon>
    </lineage>
</organism>
<dbReference type="EMBL" id="CP001618">
    <property type="protein sequence ID" value="ACQ81428.1"/>
    <property type="molecule type" value="Genomic_DNA"/>
</dbReference>
<dbReference type="RefSeq" id="WP_015883668.1">
    <property type="nucleotide sequence ID" value="NC_012669.1"/>
</dbReference>
<dbReference type="SMR" id="C5C0N2"/>
<dbReference type="STRING" id="471853.Bcav_3184"/>
<dbReference type="KEGG" id="bcv:Bcav_3184"/>
<dbReference type="eggNOG" id="COG0267">
    <property type="taxonomic scope" value="Bacteria"/>
</dbReference>
<dbReference type="HOGENOM" id="CLU_190949_0_2_11"/>
<dbReference type="Proteomes" id="UP000007962">
    <property type="component" value="Chromosome"/>
</dbReference>
<dbReference type="GO" id="GO:0005737">
    <property type="term" value="C:cytoplasm"/>
    <property type="evidence" value="ECO:0007669"/>
    <property type="project" value="UniProtKB-ARBA"/>
</dbReference>
<dbReference type="GO" id="GO:1990904">
    <property type="term" value="C:ribonucleoprotein complex"/>
    <property type="evidence" value="ECO:0007669"/>
    <property type="project" value="UniProtKB-KW"/>
</dbReference>
<dbReference type="GO" id="GO:0005840">
    <property type="term" value="C:ribosome"/>
    <property type="evidence" value="ECO:0007669"/>
    <property type="project" value="UniProtKB-KW"/>
</dbReference>
<dbReference type="GO" id="GO:0003735">
    <property type="term" value="F:structural constituent of ribosome"/>
    <property type="evidence" value="ECO:0007669"/>
    <property type="project" value="InterPro"/>
</dbReference>
<dbReference type="GO" id="GO:0006412">
    <property type="term" value="P:translation"/>
    <property type="evidence" value="ECO:0007669"/>
    <property type="project" value="UniProtKB-UniRule"/>
</dbReference>
<dbReference type="Gene3D" id="2.20.28.120">
    <property type="entry name" value="Ribosomal protein L33"/>
    <property type="match status" value="1"/>
</dbReference>
<dbReference type="HAMAP" id="MF_00294">
    <property type="entry name" value="Ribosomal_bL33"/>
    <property type="match status" value="1"/>
</dbReference>
<dbReference type="InterPro" id="IPR001705">
    <property type="entry name" value="Ribosomal_bL33"/>
</dbReference>
<dbReference type="InterPro" id="IPR018264">
    <property type="entry name" value="Ribosomal_bL33_CS"/>
</dbReference>
<dbReference type="InterPro" id="IPR038584">
    <property type="entry name" value="Ribosomal_bL33_sf"/>
</dbReference>
<dbReference type="InterPro" id="IPR011332">
    <property type="entry name" value="Ribosomal_zn-bd"/>
</dbReference>
<dbReference type="NCBIfam" id="NF001764">
    <property type="entry name" value="PRK00504.1"/>
    <property type="match status" value="1"/>
</dbReference>
<dbReference type="NCBIfam" id="NF001860">
    <property type="entry name" value="PRK00595.1"/>
    <property type="match status" value="1"/>
</dbReference>
<dbReference type="NCBIfam" id="TIGR01023">
    <property type="entry name" value="rpmG_bact"/>
    <property type="match status" value="1"/>
</dbReference>
<dbReference type="PANTHER" id="PTHR43168">
    <property type="entry name" value="50S RIBOSOMAL PROTEIN L33, CHLOROPLASTIC"/>
    <property type="match status" value="1"/>
</dbReference>
<dbReference type="PANTHER" id="PTHR43168:SF2">
    <property type="entry name" value="LARGE RIBOSOMAL SUBUNIT PROTEIN BL33C"/>
    <property type="match status" value="1"/>
</dbReference>
<dbReference type="Pfam" id="PF00471">
    <property type="entry name" value="Ribosomal_L33"/>
    <property type="match status" value="1"/>
</dbReference>
<dbReference type="SUPFAM" id="SSF57829">
    <property type="entry name" value="Zn-binding ribosomal proteins"/>
    <property type="match status" value="1"/>
</dbReference>
<dbReference type="PROSITE" id="PS00582">
    <property type="entry name" value="RIBOSOMAL_L33"/>
    <property type="match status" value="1"/>
</dbReference>
<name>RL33_BEUC1</name>
<comment type="similarity">
    <text evidence="1">Belongs to the bacterial ribosomal protein bL33 family.</text>
</comment>
<protein>
    <recommendedName>
        <fullName evidence="1">Large ribosomal subunit protein bL33</fullName>
    </recommendedName>
    <alternativeName>
        <fullName evidence="2">50S ribosomal protein L33</fullName>
    </alternativeName>
</protein>